<keyword id="KW-0004">4Fe-4S</keyword>
<keyword id="KW-0963">Cytoplasm</keyword>
<keyword id="KW-0274">FAD</keyword>
<keyword id="KW-0285">Flavoprotein</keyword>
<keyword id="KW-0408">Iron</keyword>
<keyword id="KW-0411">Iron-sulfur</keyword>
<keyword id="KW-0479">Metal-binding</keyword>
<keyword id="KW-0484">Methanogenesis</keyword>
<keyword id="KW-0560">Oxidoreductase</keyword>
<keyword id="KW-1185">Reference proteome</keyword>
<name>HDRA1_METAC</name>
<dbReference type="EC" id="1.8.7.3" evidence="8"/>
<dbReference type="EMBL" id="AE010299">
    <property type="protein sequence ID" value="AAM06501.1"/>
    <property type="molecule type" value="Genomic_DNA"/>
</dbReference>
<dbReference type="SMR" id="Q8TLB0"/>
<dbReference type="STRING" id="188937.MA_3128"/>
<dbReference type="EnsemblBacteria" id="AAM06501">
    <property type="protein sequence ID" value="AAM06501"/>
    <property type="gene ID" value="MA_3128"/>
</dbReference>
<dbReference type="KEGG" id="mac:MA_3128"/>
<dbReference type="HOGENOM" id="CLU_020302_0_0_2"/>
<dbReference type="InParanoid" id="Q8TLB0"/>
<dbReference type="PhylomeDB" id="Q8TLB0"/>
<dbReference type="BioCyc" id="MetaCyc:MONOMER-20156"/>
<dbReference type="UniPathway" id="UPA00647">
    <property type="reaction ID" value="UER00700"/>
</dbReference>
<dbReference type="Proteomes" id="UP000002487">
    <property type="component" value="Chromosome"/>
</dbReference>
<dbReference type="GO" id="GO:0005737">
    <property type="term" value="C:cytoplasm"/>
    <property type="evidence" value="ECO:0007669"/>
    <property type="project" value="UniProtKB-SubCell"/>
</dbReference>
<dbReference type="GO" id="GO:0051539">
    <property type="term" value="F:4 iron, 4 sulfur cluster binding"/>
    <property type="evidence" value="ECO:0007669"/>
    <property type="project" value="UniProtKB-KW"/>
</dbReference>
<dbReference type="GO" id="GO:0046872">
    <property type="term" value="F:metal ion binding"/>
    <property type="evidence" value="ECO:0007669"/>
    <property type="project" value="UniProtKB-KW"/>
</dbReference>
<dbReference type="GO" id="GO:0016491">
    <property type="term" value="F:oxidoreductase activity"/>
    <property type="evidence" value="ECO:0007669"/>
    <property type="project" value="UniProtKB-KW"/>
</dbReference>
<dbReference type="GO" id="GO:0015948">
    <property type="term" value="P:methanogenesis"/>
    <property type="evidence" value="ECO:0007669"/>
    <property type="project" value="UniProtKB-KW"/>
</dbReference>
<dbReference type="Gene3D" id="3.30.70.20">
    <property type="match status" value="1"/>
</dbReference>
<dbReference type="Gene3D" id="3.30.70.3270">
    <property type="match status" value="1"/>
</dbReference>
<dbReference type="Gene3D" id="3.50.50.60">
    <property type="entry name" value="FAD/NAD(P)-binding domain"/>
    <property type="match status" value="1"/>
</dbReference>
<dbReference type="InterPro" id="IPR017896">
    <property type="entry name" value="4Fe4S_Fe-S-bd"/>
</dbReference>
<dbReference type="InterPro" id="IPR017900">
    <property type="entry name" value="4Fe4S_Fe_S_CS"/>
</dbReference>
<dbReference type="InterPro" id="IPR036188">
    <property type="entry name" value="FAD/NAD-bd_sf"/>
</dbReference>
<dbReference type="InterPro" id="IPR039650">
    <property type="entry name" value="HdrA-like"/>
</dbReference>
<dbReference type="InterPro" id="IPR053641">
    <property type="entry name" value="HdrA_heterodisulfide_rdct"/>
</dbReference>
<dbReference type="InterPro" id="IPR003813">
    <property type="entry name" value="MvhD/FlpD"/>
</dbReference>
<dbReference type="NCBIfam" id="NF041778">
    <property type="entry name" value="hetero_SS_HdrA"/>
    <property type="match status" value="1"/>
</dbReference>
<dbReference type="PANTHER" id="PTHR43498:SF1">
    <property type="entry name" value="COB--COM HETERODISULFIDE REDUCTASE IRON-SULFUR SUBUNIT A"/>
    <property type="match status" value="1"/>
</dbReference>
<dbReference type="PANTHER" id="PTHR43498">
    <property type="entry name" value="FERREDOXIN:COB-COM HETERODISULFIDE REDUCTASE SUBUNIT A"/>
    <property type="match status" value="1"/>
</dbReference>
<dbReference type="Pfam" id="PF12831">
    <property type="entry name" value="FAD_oxidored"/>
    <property type="match status" value="1"/>
</dbReference>
<dbReference type="Pfam" id="PF02662">
    <property type="entry name" value="FlpD"/>
    <property type="match status" value="1"/>
</dbReference>
<dbReference type="SUPFAM" id="SSF54862">
    <property type="entry name" value="4Fe-4S ferredoxins"/>
    <property type="match status" value="1"/>
</dbReference>
<dbReference type="SUPFAM" id="SSF51905">
    <property type="entry name" value="FAD/NAD(P)-binding domain"/>
    <property type="match status" value="1"/>
</dbReference>
<dbReference type="PROSITE" id="PS00198">
    <property type="entry name" value="4FE4S_FER_1"/>
    <property type="match status" value="2"/>
</dbReference>
<dbReference type="PROSITE" id="PS51379">
    <property type="entry name" value="4FE4S_FER_2"/>
    <property type="match status" value="4"/>
</dbReference>
<reference key="1">
    <citation type="journal article" date="2002" name="Genome Res.">
        <title>The genome of Methanosarcina acetivorans reveals extensive metabolic and physiological diversity.</title>
        <authorList>
            <person name="Galagan J.E."/>
            <person name="Nusbaum C."/>
            <person name="Roy A."/>
            <person name="Endrizzi M.G."/>
            <person name="Macdonald P."/>
            <person name="FitzHugh W."/>
            <person name="Calvo S."/>
            <person name="Engels R."/>
            <person name="Smirnov S."/>
            <person name="Atnoor D."/>
            <person name="Brown A."/>
            <person name="Allen N."/>
            <person name="Naylor J."/>
            <person name="Stange-Thomann N."/>
            <person name="DeArellano K."/>
            <person name="Johnson R."/>
            <person name="Linton L."/>
            <person name="McEwan P."/>
            <person name="McKernan K."/>
            <person name="Talamas J."/>
            <person name="Tirrell A."/>
            <person name="Ye W."/>
            <person name="Zimmer A."/>
            <person name="Barber R.D."/>
            <person name="Cann I."/>
            <person name="Graham D.E."/>
            <person name="Grahame D.A."/>
            <person name="Guss A.M."/>
            <person name="Hedderich R."/>
            <person name="Ingram-Smith C."/>
            <person name="Kuettner H.C."/>
            <person name="Krzycki J.A."/>
            <person name="Leigh J.A."/>
            <person name="Li W."/>
            <person name="Liu J."/>
            <person name="Mukhopadhyay B."/>
            <person name="Reeve J.N."/>
            <person name="Smith K."/>
            <person name="Springer T.A."/>
            <person name="Umayam L.A."/>
            <person name="White O."/>
            <person name="White R.H."/>
            <person name="de Macario E.C."/>
            <person name="Ferry J.G."/>
            <person name="Jarrell K.F."/>
            <person name="Jing H."/>
            <person name="Macario A.J.L."/>
            <person name="Paulsen I.T."/>
            <person name="Pritchett M."/>
            <person name="Sowers K.R."/>
            <person name="Swanson R.V."/>
            <person name="Zinder S.H."/>
            <person name="Lander E."/>
            <person name="Metcalf W.W."/>
            <person name="Birren B."/>
        </authorList>
    </citation>
    <scope>NUCLEOTIDE SEQUENCE [LARGE SCALE GENOMIC DNA]</scope>
    <source>
        <strain>ATCC 35395 / DSM 2834 / JCM 12185 / C2A</strain>
    </source>
</reference>
<reference key="2">
    <citation type="journal article" date="2010" name="Mol. Microbiol.">
        <title>Methanogenesis by Methanosarcina acetivorans involves two structurally and functionally distinct classes of heterodisulfide reductase.</title>
        <authorList>
            <person name="Buan N.R."/>
            <person name="Metcalf W.W."/>
        </authorList>
    </citation>
    <scope>FUNCTION</scope>
    <scope>CATALYTIC ACTIVITY</scope>
    <scope>SUBUNIT</scope>
    <scope>INDUCTION</scope>
    <scope>DISRUPTION PHENOTYPE</scope>
    <source>
        <strain>ATCC 35395 / DSM 2834 / JCM 12185 / C2A</strain>
    </source>
</reference>
<protein>
    <recommendedName>
        <fullName evidence="7">Ferredoxin:CoB-CoM heterodisulfide reductase subunit A</fullName>
        <ecNumber evidence="8">1.8.7.3</ecNumber>
    </recommendedName>
</protein>
<feature type="chain" id="PRO_0000443934" description="Ferredoxin:CoB-CoM heterodisulfide reductase subunit A">
    <location>
        <begin position="1"/>
        <end position="801"/>
    </location>
</feature>
<feature type="domain" description="4Fe-4S ferredoxin-type 1" evidence="3">
    <location>
        <begin position="239"/>
        <end position="269"/>
    </location>
</feature>
<feature type="domain" description="4Fe-4S ferredoxin-type 2" evidence="3">
    <location>
        <begin position="285"/>
        <end position="320"/>
    </location>
</feature>
<feature type="domain" description="4Fe-4S ferredoxin-type 3" evidence="3">
    <location>
        <begin position="606"/>
        <end position="634"/>
    </location>
</feature>
<feature type="domain" description="4Fe-4S ferredoxin-type 4" evidence="3">
    <location>
        <begin position="635"/>
        <end position="664"/>
    </location>
</feature>
<feature type="region of interest" description="Disordered" evidence="4">
    <location>
        <begin position="382"/>
        <end position="409"/>
    </location>
</feature>
<feature type="binding site" evidence="2">
    <location>
        <begin position="149"/>
        <end position="172"/>
    </location>
    <ligand>
        <name>FAD</name>
        <dbReference type="ChEBI" id="CHEBI:57692"/>
    </ligand>
</feature>
<feature type="binding site" evidence="3">
    <location>
        <position position="248"/>
    </location>
    <ligand>
        <name>[4Fe-4S] cluster</name>
        <dbReference type="ChEBI" id="CHEBI:49883"/>
        <label>1</label>
    </ligand>
</feature>
<feature type="binding site" evidence="3">
    <location>
        <position position="251"/>
    </location>
    <ligand>
        <name>[4Fe-4S] cluster</name>
        <dbReference type="ChEBI" id="CHEBI:49883"/>
        <label>1</label>
    </ligand>
</feature>
<feature type="binding site" evidence="3">
    <location>
        <position position="254"/>
    </location>
    <ligand>
        <name>[4Fe-4S] cluster</name>
        <dbReference type="ChEBI" id="CHEBI:49883"/>
        <label>1</label>
    </ligand>
</feature>
<feature type="binding site" evidence="3">
    <location>
        <position position="258"/>
    </location>
    <ligand>
        <name>[4Fe-4S] cluster</name>
        <dbReference type="ChEBI" id="CHEBI:49883"/>
        <label>2</label>
    </ligand>
</feature>
<feature type="binding site" evidence="3">
    <location>
        <position position="295"/>
    </location>
    <ligand>
        <name>[4Fe-4S] cluster</name>
        <dbReference type="ChEBI" id="CHEBI:49883"/>
        <label>2</label>
    </ligand>
</feature>
<feature type="binding site" evidence="3">
    <location>
        <position position="303"/>
    </location>
    <ligand>
        <name>[4Fe-4S] cluster</name>
        <dbReference type="ChEBI" id="CHEBI:49883"/>
        <label>2</label>
    </ligand>
</feature>
<feature type="binding site" evidence="3">
    <location>
        <position position="306"/>
    </location>
    <ligand>
        <name>[4Fe-4S] cluster</name>
        <dbReference type="ChEBI" id="CHEBI:49883"/>
        <label>2</label>
    </ligand>
</feature>
<feature type="binding site" evidence="3">
    <location>
        <position position="310"/>
    </location>
    <ligand>
        <name>[4Fe-4S] cluster</name>
        <dbReference type="ChEBI" id="CHEBI:49883"/>
        <label>1</label>
    </ligand>
</feature>
<feature type="binding site" evidence="3">
    <location>
        <position position="615"/>
    </location>
    <ligand>
        <name>[4Fe-4S] cluster</name>
        <dbReference type="ChEBI" id="CHEBI:49883"/>
        <label>3</label>
    </ligand>
</feature>
<feature type="binding site" evidence="3">
    <location>
        <position position="618"/>
    </location>
    <ligand>
        <name>[4Fe-4S] cluster</name>
        <dbReference type="ChEBI" id="CHEBI:49883"/>
        <label>3</label>
    </ligand>
</feature>
<feature type="binding site" evidence="3">
    <location>
        <position position="621"/>
    </location>
    <ligand>
        <name>[4Fe-4S] cluster</name>
        <dbReference type="ChEBI" id="CHEBI:49883"/>
        <label>3</label>
    </ligand>
</feature>
<feature type="binding site" evidence="3">
    <location>
        <position position="624"/>
    </location>
    <ligand>
        <name>[4Fe-4S] cluster</name>
        <dbReference type="ChEBI" id="CHEBI:49883"/>
        <label>4</label>
    </ligand>
</feature>
<feature type="binding site" evidence="3">
    <location>
        <position position="644"/>
    </location>
    <ligand>
        <name>[4Fe-4S] cluster</name>
        <dbReference type="ChEBI" id="CHEBI:49883"/>
        <label>4</label>
    </ligand>
</feature>
<feature type="binding site" evidence="3">
    <location>
        <position position="647"/>
    </location>
    <ligand>
        <name>[4Fe-4S] cluster</name>
        <dbReference type="ChEBI" id="CHEBI:49883"/>
        <label>4</label>
    </ligand>
</feature>
<feature type="binding site" evidence="3">
    <location>
        <position position="650"/>
    </location>
    <ligand>
        <name>[4Fe-4S] cluster</name>
        <dbReference type="ChEBI" id="CHEBI:49883"/>
        <label>4</label>
    </ligand>
</feature>
<feature type="binding site" evidence="3">
    <location>
        <position position="654"/>
    </location>
    <ligand>
        <name>[4Fe-4S] cluster</name>
        <dbReference type="ChEBI" id="CHEBI:49883"/>
        <label>3</label>
    </ligand>
</feature>
<evidence type="ECO:0000250" key="1">
    <source>
        <dbReference type="UniProtKB" id="Q8TM02"/>
    </source>
</evidence>
<evidence type="ECO:0000255" key="2"/>
<evidence type="ECO:0000255" key="3">
    <source>
        <dbReference type="PROSITE-ProRule" id="PRU00711"/>
    </source>
</evidence>
<evidence type="ECO:0000256" key="4">
    <source>
        <dbReference type="SAM" id="MobiDB-lite"/>
    </source>
</evidence>
<evidence type="ECO:0000269" key="5">
    <source>
    </source>
</evidence>
<evidence type="ECO:0000303" key="6">
    <source>
    </source>
</evidence>
<evidence type="ECO:0000305" key="7"/>
<evidence type="ECO:0000305" key="8">
    <source>
    </source>
</evidence>
<evidence type="ECO:0000312" key="9">
    <source>
        <dbReference type="EMBL" id="AAM06501.1"/>
    </source>
</evidence>
<gene>
    <name evidence="6" type="primary">hdrA1</name>
    <name evidence="9" type="ordered locus">MA_3128</name>
</gene>
<proteinExistence type="evidence at protein level"/>
<organism>
    <name type="scientific">Methanosarcina acetivorans (strain ATCC 35395 / DSM 2834 / JCM 12185 / C2A)</name>
    <dbReference type="NCBI Taxonomy" id="188937"/>
    <lineage>
        <taxon>Archaea</taxon>
        <taxon>Methanobacteriati</taxon>
        <taxon>Methanobacteriota</taxon>
        <taxon>Stenosarchaea group</taxon>
        <taxon>Methanomicrobia</taxon>
        <taxon>Methanosarcinales</taxon>
        <taxon>Methanosarcinaceae</taxon>
        <taxon>Methanosarcina</taxon>
    </lineage>
</organism>
<accession>Q8TLB0</accession>
<comment type="function">
    <text evidence="5">Part of a complex that catalyzes the reversible reduction of CoM-S-S-CoB to the thiol-coenzymes H-S-CoM (coenzyme M) and H-S-CoB (coenzyme B). Probably involved in methylotrophic methanogenesis but not in aceticlastic methanogenesis.</text>
</comment>
<comment type="catalytic activity">
    <reaction evidence="8">
        <text>coenzyme B + coenzyme M + 2 oxidized [2Fe-2S]-[ferredoxin] = coenzyme M-coenzyme B heterodisulfide + 2 reduced [2Fe-2S]-[ferredoxin] + 2 H(+)</text>
        <dbReference type="Rhea" id="RHEA:55160"/>
        <dbReference type="Rhea" id="RHEA-COMP:10000"/>
        <dbReference type="Rhea" id="RHEA-COMP:10001"/>
        <dbReference type="ChEBI" id="CHEBI:15378"/>
        <dbReference type="ChEBI" id="CHEBI:33737"/>
        <dbReference type="ChEBI" id="CHEBI:33738"/>
        <dbReference type="ChEBI" id="CHEBI:58319"/>
        <dbReference type="ChEBI" id="CHEBI:58411"/>
        <dbReference type="ChEBI" id="CHEBI:58596"/>
        <dbReference type="EC" id="1.8.7.3"/>
    </reaction>
</comment>
<comment type="cofactor">
    <cofactor evidence="3">
        <name>[4Fe-4S] cluster</name>
        <dbReference type="ChEBI" id="CHEBI:49883"/>
    </cofactor>
    <text evidence="3">Binds 4 [4Fe-4S] cluster.</text>
</comment>
<comment type="cofactor">
    <cofactor evidence="1">
        <name>FAD</name>
        <dbReference type="ChEBI" id="CHEBI:57692"/>
    </cofactor>
</comment>
<comment type="pathway">
    <text evidence="7">Cofactor metabolism; coenzyme M-coenzyme B heterodisulfide reduction; coenzyme B and coenzyme M from coenzyme M-coenzyme B heterodisulfide: step 1/1.</text>
</comment>
<comment type="subunit">
    <text evidence="5">The ferredoxin:CoB-CoM heterodisulfide reductase is composed of three subunits; HdrA1, HdrB1 and HdrC1.</text>
</comment>
<comment type="subcellular location">
    <subcellularLocation>
        <location evidence="7">Cytoplasm</location>
    </subcellularLocation>
</comment>
<comment type="induction">
    <text evidence="5">Induced on trimethylamine or methanol, but not on acetate as the sole energy source.</text>
</comment>
<comment type="disruption phenotype">
    <text evidence="5">Triple hdrA1C1B1 deletion decreases methane production from methanol, but does not affect methanogenesis from acetate. Deletion results in up-regulation of CoB-SH and CoM-SH synthesis and transport, and methylsulfide methyltransferases.</text>
</comment>
<comment type="similarity">
    <text evidence="7">Belongs to the HdrA family.</text>
</comment>
<sequence length="801" mass="86966">MTDGLNKAAVFICHCSGNISEHVDIDAVKKTLKAEGISVFDYEYMCSSQGQALIKKKIVEGSLDRVVIGSCTPSKHGTLFKKCIQETGLNRAGLEIANLREQCAWVHPDRTGATEKALSLLRAKLKRLENVEPLDEIKVDIAQQALVIGGGIAGITAALNLADNGVSTVLVENNSSIGGQMAKIGKIFSPDKLAEECAMCSLSPLMNEVAAHPKITLLTRTEVESLSGSAGNFTIRLRKKPRYVKDSCTACGRCSRVCPVQVEDEFNCGHMDKKAISLRFSQSVPKIYCIDPDYCLQLNGEACGKCADACKNEAIDFSQKEEIVELNVGAVVVATGFEEYDVSQKPQYGYGIFENVLTQMELARVLGINGPTKGELLRVSDFSKASSDPTPATCDSRCEDSSDESQGTDTPKRIVMIQCVGSRDEKEGGNRYCSRYCCMAALKHASLIKKKHPETEITICYIDVRAFGFYENYYRAVQETGVNFVRGRPAEVIEKPDKSLVVRVEDTLDQKMRELPADLVVLSAAMVPSPGTRKIASVLNLSQDESGFIKERHSKLKPVDSSLDGIFVCGTAQSPKDVTDTIAQAGLAAVRARAFITDSPKVLDNEIATINQLLCTRCGECLKCPFDALSVNESGRVVLDPLICTGCGYCTKLCGEGAVQIAGFTKLQLKAEMEGVLEEGDVLGFVNSGIASLTCDNIGNSVLTYPSNVKLIKVPTGLVVDRDLVLHAFRHGASSVLFVEDPPDNPRAEVIYPLTVSHFEELKEELGDSGNRIYFKKAYVPNTKGLAGTFTSLAREGEMIR</sequence>